<organism>
    <name type="scientific">Campylobacter curvus (strain 525.92)</name>
    <dbReference type="NCBI Taxonomy" id="360105"/>
    <lineage>
        <taxon>Bacteria</taxon>
        <taxon>Pseudomonadati</taxon>
        <taxon>Campylobacterota</taxon>
        <taxon>Epsilonproteobacteria</taxon>
        <taxon>Campylobacterales</taxon>
        <taxon>Campylobacteraceae</taxon>
        <taxon>Campylobacter</taxon>
    </lineage>
</organism>
<comment type="function">
    <text evidence="1">Catalyzes the conversion of glucosamine-6-phosphate to glucosamine-1-phosphate.</text>
</comment>
<comment type="catalytic activity">
    <reaction evidence="1">
        <text>alpha-D-glucosamine 1-phosphate = D-glucosamine 6-phosphate</text>
        <dbReference type="Rhea" id="RHEA:23424"/>
        <dbReference type="ChEBI" id="CHEBI:58516"/>
        <dbReference type="ChEBI" id="CHEBI:58725"/>
        <dbReference type="EC" id="5.4.2.10"/>
    </reaction>
</comment>
<comment type="cofactor">
    <cofactor evidence="1">
        <name>Mg(2+)</name>
        <dbReference type="ChEBI" id="CHEBI:18420"/>
    </cofactor>
    <text evidence="1">Binds 1 Mg(2+) ion per subunit.</text>
</comment>
<comment type="PTM">
    <text evidence="1">Activated by phosphorylation.</text>
</comment>
<comment type="similarity">
    <text evidence="1">Belongs to the phosphohexose mutase family.</text>
</comment>
<dbReference type="EC" id="5.4.2.10" evidence="1"/>
<dbReference type="EMBL" id="CP000767">
    <property type="protein sequence ID" value="EAT99675.1"/>
    <property type="molecule type" value="Genomic_DNA"/>
</dbReference>
<dbReference type="RefSeq" id="WP_011991678.1">
    <property type="nucleotide sequence ID" value="NC_009715.2"/>
</dbReference>
<dbReference type="SMR" id="A7GW10"/>
<dbReference type="STRING" id="360105.CCV52592_0742"/>
<dbReference type="KEGG" id="ccv:CCV52592_0742"/>
<dbReference type="HOGENOM" id="CLU_016950_7_0_7"/>
<dbReference type="OrthoDB" id="9806956at2"/>
<dbReference type="Proteomes" id="UP000006380">
    <property type="component" value="Chromosome"/>
</dbReference>
<dbReference type="GO" id="GO:0005829">
    <property type="term" value="C:cytosol"/>
    <property type="evidence" value="ECO:0007669"/>
    <property type="project" value="TreeGrafter"/>
</dbReference>
<dbReference type="GO" id="GO:0000287">
    <property type="term" value="F:magnesium ion binding"/>
    <property type="evidence" value="ECO:0007669"/>
    <property type="project" value="UniProtKB-UniRule"/>
</dbReference>
<dbReference type="GO" id="GO:0008966">
    <property type="term" value="F:phosphoglucosamine mutase activity"/>
    <property type="evidence" value="ECO:0007669"/>
    <property type="project" value="UniProtKB-UniRule"/>
</dbReference>
<dbReference type="GO" id="GO:0004615">
    <property type="term" value="F:phosphomannomutase activity"/>
    <property type="evidence" value="ECO:0007669"/>
    <property type="project" value="TreeGrafter"/>
</dbReference>
<dbReference type="GO" id="GO:0005975">
    <property type="term" value="P:carbohydrate metabolic process"/>
    <property type="evidence" value="ECO:0007669"/>
    <property type="project" value="InterPro"/>
</dbReference>
<dbReference type="GO" id="GO:0009252">
    <property type="term" value="P:peptidoglycan biosynthetic process"/>
    <property type="evidence" value="ECO:0007669"/>
    <property type="project" value="TreeGrafter"/>
</dbReference>
<dbReference type="GO" id="GO:0006048">
    <property type="term" value="P:UDP-N-acetylglucosamine biosynthetic process"/>
    <property type="evidence" value="ECO:0007669"/>
    <property type="project" value="TreeGrafter"/>
</dbReference>
<dbReference type="CDD" id="cd05802">
    <property type="entry name" value="GlmM"/>
    <property type="match status" value="1"/>
</dbReference>
<dbReference type="FunFam" id="3.40.120.10:FF:000001">
    <property type="entry name" value="Phosphoglucosamine mutase"/>
    <property type="match status" value="1"/>
</dbReference>
<dbReference type="FunFam" id="3.40.120.10:FF:000003">
    <property type="entry name" value="Phosphoglucosamine mutase"/>
    <property type="match status" value="1"/>
</dbReference>
<dbReference type="Gene3D" id="3.40.120.10">
    <property type="entry name" value="Alpha-D-Glucose-1,6-Bisphosphate, subunit A, domain 3"/>
    <property type="match status" value="3"/>
</dbReference>
<dbReference type="Gene3D" id="3.30.310.50">
    <property type="entry name" value="Alpha-D-phosphohexomutase, C-terminal domain"/>
    <property type="match status" value="1"/>
</dbReference>
<dbReference type="HAMAP" id="MF_01554_B">
    <property type="entry name" value="GlmM_B"/>
    <property type="match status" value="1"/>
</dbReference>
<dbReference type="InterPro" id="IPR005844">
    <property type="entry name" value="A-D-PHexomutase_a/b/a-I"/>
</dbReference>
<dbReference type="InterPro" id="IPR016055">
    <property type="entry name" value="A-D-PHexomutase_a/b/a-I/II/III"/>
</dbReference>
<dbReference type="InterPro" id="IPR005845">
    <property type="entry name" value="A-D-PHexomutase_a/b/a-II"/>
</dbReference>
<dbReference type="InterPro" id="IPR005846">
    <property type="entry name" value="A-D-PHexomutase_a/b/a-III"/>
</dbReference>
<dbReference type="InterPro" id="IPR005843">
    <property type="entry name" value="A-D-PHexomutase_C"/>
</dbReference>
<dbReference type="InterPro" id="IPR036900">
    <property type="entry name" value="A-D-PHexomutase_C_sf"/>
</dbReference>
<dbReference type="InterPro" id="IPR016066">
    <property type="entry name" value="A-D-PHexomutase_CS"/>
</dbReference>
<dbReference type="InterPro" id="IPR005841">
    <property type="entry name" value="Alpha-D-phosphohexomutase_SF"/>
</dbReference>
<dbReference type="InterPro" id="IPR006352">
    <property type="entry name" value="GlmM_bact"/>
</dbReference>
<dbReference type="InterPro" id="IPR050060">
    <property type="entry name" value="Phosphoglucosamine_mutase"/>
</dbReference>
<dbReference type="NCBIfam" id="TIGR01455">
    <property type="entry name" value="glmM"/>
    <property type="match status" value="1"/>
</dbReference>
<dbReference type="NCBIfam" id="NF008139">
    <property type="entry name" value="PRK10887.1"/>
    <property type="match status" value="1"/>
</dbReference>
<dbReference type="PANTHER" id="PTHR42946:SF1">
    <property type="entry name" value="PHOSPHOGLUCOMUTASE (ALPHA-D-GLUCOSE-1,6-BISPHOSPHATE-DEPENDENT)"/>
    <property type="match status" value="1"/>
</dbReference>
<dbReference type="PANTHER" id="PTHR42946">
    <property type="entry name" value="PHOSPHOHEXOSE MUTASE"/>
    <property type="match status" value="1"/>
</dbReference>
<dbReference type="Pfam" id="PF02878">
    <property type="entry name" value="PGM_PMM_I"/>
    <property type="match status" value="1"/>
</dbReference>
<dbReference type="Pfam" id="PF02879">
    <property type="entry name" value="PGM_PMM_II"/>
    <property type="match status" value="1"/>
</dbReference>
<dbReference type="Pfam" id="PF02880">
    <property type="entry name" value="PGM_PMM_III"/>
    <property type="match status" value="1"/>
</dbReference>
<dbReference type="Pfam" id="PF00408">
    <property type="entry name" value="PGM_PMM_IV"/>
    <property type="match status" value="1"/>
</dbReference>
<dbReference type="PRINTS" id="PR00509">
    <property type="entry name" value="PGMPMM"/>
</dbReference>
<dbReference type="SUPFAM" id="SSF55957">
    <property type="entry name" value="Phosphoglucomutase, C-terminal domain"/>
    <property type="match status" value="1"/>
</dbReference>
<dbReference type="SUPFAM" id="SSF53738">
    <property type="entry name" value="Phosphoglucomutase, first 3 domains"/>
    <property type="match status" value="3"/>
</dbReference>
<dbReference type="PROSITE" id="PS00710">
    <property type="entry name" value="PGM_PMM"/>
    <property type="match status" value="1"/>
</dbReference>
<gene>
    <name evidence="1" type="primary">glmM</name>
    <name type="ordered locus">Ccur92_00980</name>
    <name type="ORF">CCV52592_0742</name>
</gene>
<feature type="chain" id="PRO_1000068895" description="Phosphoglucosamine mutase">
    <location>
        <begin position="1"/>
        <end position="446"/>
    </location>
</feature>
<feature type="active site" description="Phosphoserine intermediate" evidence="1">
    <location>
        <position position="99"/>
    </location>
</feature>
<feature type="binding site" description="via phosphate group" evidence="1">
    <location>
        <position position="99"/>
    </location>
    <ligand>
        <name>Mg(2+)</name>
        <dbReference type="ChEBI" id="CHEBI:18420"/>
    </ligand>
</feature>
<feature type="binding site" evidence="1">
    <location>
        <position position="242"/>
    </location>
    <ligand>
        <name>Mg(2+)</name>
        <dbReference type="ChEBI" id="CHEBI:18420"/>
    </ligand>
</feature>
<feature type="binding site" evidence="1">
    <location>
        <position position="244"/>
    </location>
    <ligand>
        <name>Mg(2+)</name>
        <dbReference type="ChEBI" id="CHEBI:18420"/>
    </ligand>
</feature>
<feature type="binding site" evidence="1">
    <location>
        <position position="246"/>
    </location>
    <ligand>
        <name>Mg(2+)</name>
        <dbReference type="ChEBI" id="CHEBI:18420"/>
    </ligand>
</feature>
<feature type="modified residue" description="Phosphoserine" evidence="1">
    <location>
        <position position="99"/>
    </location>
</feature>
<reference key="1">
    <citation type="submission" date="2007-07" db="EMBL/GenBank/DDBJ databases">
        <title>Genome sequence of Campylobacter curvus 525.92 isolated from human feces.</title>
        <authorList>
            <person name="Fouts D.E."/>
            <person name="Mongodin E.F."/>
            <person name="Puiu D."/>
            <person name="Sebastian Y."/>
            <person name="Miller W.G."/>
            <person name="Mandrell R.E."/>
            <person name="Lastovica A.J."/>
            <person name="Nelson K.E."/>
        </authorList>
    </citation>
    <scope>NUCLEOTIDE SEQUENCE [LARGE SCALE GENOMIC DNA]</scope>
    <source>
        <strain>525.92</strain>
    </source>
</reference>
<sequence length="446" mass="49005">MKLFGTDGVRGKAGEKLSAQTAMRLAMAAGIYFRKYSATNVILVGKDTRKSGYMIETAIVAGLTAVGYNVLQIGPMPTPAIAFLTENMRCDAGIMISASHNPYYDNGIKFFDNCGDKIEENIEAEIEKIYYDDEMIANAQKTMTEIGANKRIDDVIGRYIVQIKNSFPKELTLKNLRVVLDVANGAAYKVAPTVFSELGADVIVINDEPNGSNINQSCGALHPEELANEVKRLRADIGFAFDGDADRLVVVDENGEVVHGDAVLGVLATYLNEKKALKGGAVVATVMSNAALEDYLKSHKIKLLRANVGDKYVLEMMKENGINFGGEQSGHVIFNDYAKTGDGLVTSMQVVAMMLKKGKKASEIFKAIKPYPQILLNLKITEKKPLEKIAGLKELEKNLEKDGIRSLFRYSGTENVIRLLLEGKNQNLVEKRMNEVEKFFIKALNA</sequence>
<name>GLMM_CAMC5</name>
<protein>
    <recommendedName>
        <fullName evidence="1">Phosphoglucosamine mutase</fullName>
        <ecNumber evidence="1">5.4.2.10</ecNumber>
    </recommendedName>
</protein>
<keyword id="KW-0413">Isomerase</keyword>
<keyword id="KW-0460">Magnesium</keyword>
<keyword id="KW-0479">Metal-binding</keyword>
<keyword id="KW-0597">Phosphoprotein</keyword>
<keyword id="KW-1185">Reference proteome</keyword>
<evidence type="ECO:0000255" key="1">
    <source>
        <dbReference type="HAMAP-Rule" id="MF_01554"/>
    </source>
</evidence>
<proteinExistence type="inferred from homology"/>
<accession>A7GW10</accession>